<reference key="1">
    <citation type="journal article" date="2002" name="Nature">
        <title>The genome sequence and structure of rice chromosome 1.</title>
        <authorList>
            <person name="Sasaki T."/>
            <person name="Matsumoto T."/>
            <person name="Yamamoto K."/>
            <person name="Sakata K."/>
            <person name="Baba T."/>
            <person name="Katayose Y."/>
            <person name="Wu J."/>
            <person name="Niimura Y."/>
            <person name="Cheng Z."/>
            <person name="Nagamura Y."/>
            <person name="Antonio B.A."/>
            <person name="Kanamori H."/>
            <person name="Hosokawa S."/>
            <person name="Masukawa M."/>
            <person name="Arikawa K."/>
            <person name="Chiden Y."/>
            <person name="Hayashi M."/>
            <person name="Okamoto M."/>
            <person name="Ando T."/>
            <person name="Aoki H."/>
            <person name="Arita K."/>
            <person name="Hamada M."/>
            <person name="Harada C."/>
            <person name="Hijishita S."/>
            <person name="Honda M."/>
            <person name="Ichikawa Y."/>
            <person name="Idonuma A."/>
            <person name="Iijima M."/>
            <person name="Ikeda M."/>
            <person name="Ikeno M."/>
            <person name="Ito S."/>
            <person name="Ito T."/>
            <person name="Ito Y."/>
            <person name="Ito Y."/>
            <person name="Iwabuchi A."/>
            <person name="Kamiya K."/>
            <person name="Karasawa W."/>
            <person name="Katagiri S."/>
            <person name="Kikuta A."/>
            <person name="Kobayashi N."/>
            <person name="Kono I."/>
            <person name="Machita K."/>
            <person name="Maehara T."/>
            <person name="Mizuno H."/>
            <person name="Mizubayashi T."/>
            <person name="Mukai Y."/>
            <person name="Nagasaki H."/>
            <person name="Nakashima M."/>
            <person name="Nakama Y."/>
            <person name="Nakamichi Y."/>
            <person name="Nakamura M."/>
            <person name="Namiki N."/>
            <person name="Negishi M."/>
            <person name="Ohta I."/>
            <person name="Ono N."/>
            <person name="Saji S."/>
            <person name="Sakai K."/>
            <person name="Shibata M."/>
            <person name="Shimokawa T."/>
            <person name="Shomura A."/>
            <person name="Song J."/>
            <person name="Takazaki Y."/>
            <person name="Terasawa K."/>
            <person name="Tsuji K."/>
            <person name="Waki K."/>
            <person name="Yamagata H."/>
            <person name="Yamane H."/>
            <person name="Yoshiki S."/>
            <person name="Yoshihara R."/>
            <person name="Yukawa K."/>
            <person name="Zhong H."/>
            <person name="Iwama H."/>
            <person name="Endo T."/>
            <person name="Ito H."/>
            <person name="Hahn J.H."/>
            <person name="Kim H.-I."/>
            <person name="Eun M.-Y."/>
            <person name="Yano M."/>
            <person name="Jiang J."/>
            <person name="Gojobori T."/>
        </authorList>
    </citation>
    <scope>NUCLEOTIDE SEQUENCE [LARGE SCALE GENOMIC DNA]</scope>
    <source>
        <strain>cv. Nipponbare</strain>
    </source>
</reference>
<reference key="2">
    <citation type="journal article" date="2005" name="Nature">
        <title>The map-based sequence of the rice genome.</title>
        <authorList>
            <consortium name="International rice genome sequencing project (IRGSP)"/>
        </authorList>
    </citation>
    <scope>NUCLEOTIDE SEQUENCE [LARGE SCALE GENOMIC DNA]</scope>
    <source>
        <strain>cv. Nipponbare</strain>
    </source>
</reference>
<reference key="3">
    <citation type="journal article" date="2008" name="Nucleic Acids Res.">
        <title>The rice annotation project database (RAP-DB): 2008 update.</title>
        <authorList>
            <consortium name="The rice annotation project (RAP)"/>
        </authorList>
    </citation>
    <scope>GENOME REANNOTATION</scope>
    <source>
        <strain>cv. Nipponbare</strain>
    </source>
</reference>
<reference key="4">
    <citation type="journal article" date="2013" name="Rice">
        <title>Improvement of the Oryza sativa Nipponbare reference genome using next generation sequence and optical map data.</title>
        <authorList>
            <person name="Kawahara Y."/>
            <person name="de la Bastide M."/>
            <person name="Hamilton J.P."/>
            <person name="Kanamori H."/>
            <person name="McCombie W.R."/>
            <person name="Ouyang S."/>
            <person name="Schwartz D.C."/>
            <person name="Tanaka T."/>
            <person name="Wu J."/>
            <person name="Zhou S."/>
            <person name="Childs K.L."/>
            <person name="Davidson R.M."/>
            <person name="Lin H."/>
            <person name="Quesada-Ocampo L."/>
            <person name="Vaillancourt B."/>
            <person name="Sakai H."/>
            <person name="Lee S.S."/>
            <person name="Kim J."/>
            <person name="Numa H."/>
            <person name="Itoh T."/>
            <person name="Buell C.R."/>
            <person name="Matsumoto T."/>
        </authorList>
    </citation>
    <scope>GENOME REANNOTATION</scope>
    <source>
        <strain>cv. Nipponbare</strain>
    </source>
</reference>
<reference key="5">
    <citation type="journal article" date="2003" name="Science">
        <title>Collection, mapping, and annotation of over 28,000 cDNA clones from japonica rice.</title>
        <authorList>
            <consortium name="The rice full-length cDNA consortium"/>
        </authorList>
    </citation>
    <scope>NUCLEOTIDE SEQUENCE [LARGE SCALE MRNA]</scope>
    <source>
        <strain>cv. Nipponbare</strain>
    </source>
</reference>
<accession>Q94DR2</accession>
<accession>A0A0P0V2U8</accession>
<protein>
    <recommendedName>
        <fullName>Dephospho-CoA kinase</fullName>
        <ecNumber>2.7.1.24</ecNumber>
    </recommendedName>
    <alternativeName>
        <fullName>Dephosphocoenzyme A kinase</fullName>
    </alternativeName>
</protein>
<feature type="chain" id="PRO_0000429414" description="Dephospho-CoA kinase">
    <location>
        <begin position="1"/>
        <end position="230"/>
    </location>
</feature>
<feature type="domain" description="DPCK">
    <location>
        <begin position="3"/>
        <end position="206"/>
    </location>
</feature>
<feature type="binding site" evidence="2">
    <location>
        <begin position="8"/>
        <end position="15"/>
    </location>
    <ligand>
        <name>ATP</name>
        <dbReference type="ChEBI" id="CHEBI:30616"/>
    </ligand>
</feature>
<gene>
    <name type="ordered locus">Os01g0360600</name>
    <name type="ORF">P0460H02.10</name>
</gene>
<organism>
    <name type="scientific">Oryza sativa subsp. japonica</name>
    <name type="common">Rice</name>
    <dbReference type="NCBI Taxonomy" id="39947"/>
    <lineage>
        <taxon>Eukaryota</taxon>
        <taxon>Viridiplantae</taxon>
        <taxon>Streptophyta</taxon>
        <taxon>Embryophyta</taxon>
        <taxon>Tracheophyta</taxon>
        <taxon>Spermatophyta</taxon>
        <taxon>Magnoliopsida</taxon>
        <taxon>Liliopsida</taxon>
        <taxon>Poales</taxon>
        <taxon>Poaceae</taxon>
        <taxon>BOP clade</taxon>
        <taxon>Oryzoideae</taxon>
        <taxon>Oryzeae</taxon>
        <taxon>Oryzinae</taxon>
        <taxon>Oryza</taxon>
        <taxon>Oryza sativa</taxon>
    </lineage>
</organism>
<evidence type="ECO:0000250" key="1"/>
<evidence type="ECO:0000255" key="2"/>
<evidence type="ECO:0000305" key="3"/>
<sequence>MRLVGLTGGIASGKSTISNLFKASGIPVVDADIVARNVVQKGTGGWKKIVEAFGNDVLLENGEIDRARLGQIVFSDPEKRQVLNRLLAPHISSGIFWEILKLWIKGCKVIVLDIPLLFETKMDQWTHPVIVVWVNEATQIERLMSRDGCSEEQARNRINAQLALDWKKSQADIVIDNSGTLDETKEKFQEVLRNVSEPLTWKERLRSRDGLFSVVVCTAVGVLLAQKNLL</sequence>
<comment type="function">
    <text evidence="1">Catalyzes the phosphorylation of the 3'-hydroxyl group of dephosphocoenzyme A to form coenzyme A.</text>
</comment>
<comment type="catalytic activity">
    <reaction>
        <text>3'-dephospho-CoA + ATP = ADP + CoA + H(+)</text>
        <dbReference type="Rhea" id="RHEA:18245"/>
        <dbReference type="ChEBI" id="CHEBI:15378"/>
        <dbReference type="ChEBI" id="CHEBI:30616"/>
        <dbReference type="ChEBI" id="CHEBI:57287"/>
        <dbReference type="ChEBI" id="CHEBI:57328"/>
        <dbReference type="ChEBI" id="CHEBI:456216"/>
        <dbReference type="EC" id="2.7.1.24"/>
    </reaction>
</comment>
<comment type="pathway">
    <text>Cofactor biosynthesis; coenzyme A biosynthesis; CoA from (R)-pantothenate: step 5/5.</text>
</comment>
<comment type="similarity">
    <text evidence="3">Belongs to the CoaE family.</text>
</comment>
<dbReference type="EC" id="2.7.1.24"/>
<dbReference type="EMBL" id="AP003257">
    <property type="protein sequence ID" value="BAB61227.1"/>
    <property type="molecule type" value="Genomic_DNA"/>
</dbReference>
<dbReference type="EMBL" id="AP008207">
    <property type="protein sequence ID" value="BAF04935.1"/>
    <property type="molecule type" value="Genomic_DNA"/>
</dbReference>
<dbReference type="EMBL" id="AP014957">
    <property type="protein sequence ID" value="BAS72098.1"/>
    <property type="molecule type" value="Genomic_DNA"/>
</dbReference>
<dbReference type="EMBL" id="AK069339">
    <property type="protein sequence ID" value="BAG91389.1"/>
    <property type="molecule type" value="mRNA"/>
</dbReference>
<dbReference type="RefSeq" id="XP_015625124.1">
    <property type="nucleotide sequence ID" value="XM_015769638.1"/>
</dbReference>
<dbReference type="SMR" id="Q94DR2"/>
<dbReference type="FunCoup" id="Q94DR2">
    <property type="interactions" value="1796"/>
</dbReference>
<dbReference type="STRING" id="39947.Q94DR2"/>
<dbReference type="PaxDb" id="39947-Q94DR2"/>
<dbReference type="EnsemblPlants" id="Os01t0360600-01">
    <property type="protein sequence ID" value="Os01t0360600-01"/>
    <property type="gene ID" value="Os01g0360600"/>
</dbReference>
<dbReference type="Gramene" id="Os01t0360600-01">
    <property type="protein sequence ID" value="Os01t0360600-01"/>
    <property type="gene ID" value="Os01g0360600"/>
</dbReference>
<dbReference type="KEGG" id="dosa:Os01g0360600"/>
<dbReference type="eggNOG" id="KOG3220">
    <property type="taxonomic scope" value="Eukaryota"/>
</dbReference>
<dbReference type="HOGENOM" id="CLU_057180_0_0_1"/>
<dbReference type="InParanoid" id="Q94DR2"/>
<dbReference type="OMA" id="CQMDIEQ"/>
<dbReference type="OrthoDB" id="247245at2759"/>
<dbReference type="UniPathway" id="UPA00241">
    <property type="reaction ID" value="UER00356"/>
</dbReference>
<dbReference type="Proteomes" id="UP000000763">
    <property type="component" value="Chromosome 1"/>
</dbReference>
<dbReference type="Proteomes" id="UP000059680">
    <property type="component" value="Chromosome 1"/>
</dbReference>
<dbReference type="GO" id="GO:0005777">
    <property type="term" value="C:peroxisome"/>
    <property type="evidence" value="ECO:0007669"/>
    <property type="project" value="EnsemblPlants"/>
</dbReference>
<dbReference type="GO" id="GO:0005524">
    <property type="term" value="F:ATP binding"/>
    <property type="evidence" value="ECO:0007669"/>
    <property type="project" value="UniProtKB-KW"/>
</dbReference>
<dbReference type="GO" id="GO:0004140">
    <property type="term" value="F:dephospho-CoA kinase activity"/>
    <property type="evidence" value="ECO:0000318"/>
    <property type="project" value="GO_Central"/>
</dbReference>
<dbReference type="GO" id="GO:0015937">
    <property type="term" value="P:coenzyme A biosynthetic process"/>
    <property type="evidence" value="ECO:0000318"/>
    <property type="project" value="GO_Central"/>
</dbReference>
<dbReference type="CDD" id="cd02022">
    <property type="entry name" value="DPCK"/>
    <property type="match status" value="1"/>
</dbReference>
<dbReference type="FunFam" id="3.40.50.300:FF:000485">
    <property type="entry name" value="Dephospho-CoA kinase CAB5"/>
    <property type="match status" value="1"/>
</dbReference>
<dbReference type="Gene3D" id="3.40.50.300">
    <property type="entry name" value="P-loop containing nucleotide triphosphate hydrolases"/>
    <property type="match status" value="1"/>
</dbReference>
<dbReference type="HAMAP" id="MF_00376">
    <property type="entry name" value="Dephospho_CoA_kinase"/>
    <property type="match status" value="1"/>
</dbReference>
<dbReference type="InterPro" id="IPR001977">
    <property type="entry name" value="Depp_CoAkinase"/>
</dbReference>
<dbReference type="InterPro" id="IPR027417">
    <property type="entry name" value="P-loop_NTPase"/>
</dbReference>
<dbReference type="NCBIfam" id="TIGR00152">
    <property type="entry name" value="dephospho-CoA kinase"/>
    <property type="match status" value="1"/>
</dbReference>
<dbReference type="PANTHER" id="PTHR10695:SF46">
    <property type="entry name" value="BIFUNCTIONAL COENZYME A SYNTHASE-RELATED"/>
    <property type="match status" value="1"/>
</dbReference>
<dbReference type="PANTHER" id="PTHR10695">
    <property type="entry name" value="DEPHOSPHO-COA KINASE-RELATED"/>
    <property type="match status" value="1"/>
</dbReference>
<dbReference type="Pfam" id="PF01121">
    <property type="entry name" value="CoaE"/>
    <property type="match status" value="1"/>
</dbReference>
<dbReference type="SUPFAM" id="SSF52540">
    <property type="entry name" value="P-loop containing nucleoside triphosphate hydrolases"/>
    <property type="match status" value="1"/>
</dbReference>
<dbReference type="PROSITE" id="PS51219">
    <property type="entry name" value="DPCK"/>
    <property type="match status" value="1"/>
</dbReference>
<name>COAE_ORYSJ</name>
<keyword id="KW-0067">ATP-binding</keyword>
<keyword id="KW-0173">Coenzyme A biosynthesis</keyword>
<keyword id="KW-0418">Kinase</keyword>
<keyword id="KW-0547">Nucleotide-binding</keyword>
<keyword id="KW-1185">Reference proteome</keyword>
<keyword id="KW-0808">Transferase</keyword>
<proteinExistence type="evidence at transcript level"/>